<protein>
    <recommendedName>
        <fullName evidence="1">PF03932 family protein CutC</fullName>
    </recommendedName>
</protein>
<sequence length="247" mass="26347">MVTHLEVCIDNIESLHYAIAGGATRIELCSSLALGGLTPSYGFMQQAAKQSSVPVYAMIRPRQGDFFYNEEELDMMRWDIEAAHQSGLDGVVLGVLTQEGDIHIPFATALCEFAQALGLGITFHRAFDQCRNAEQALEDIIHLGCERILTSGLAPSAPAGESVLKSLVEQAQGRIAIMAGAGVNADNARDLVKNTNVQEVHLSGKTTRPSQMTFIAGQSKMGASDVDDFAIPITSTQAIANVAAALK</sequence>
<comment type="subcellular location">
    <subcellularLocation>
        <location evidence="1">Cytoplasm</location>
    </subcellularLocation>
</comment>
<comment type="similarity">
    <text evidence="1">Belongs to the CutC family.</text>
</comment>
<comment type="caution">
    <text evidence="1">Once thought to be involved in copper homeostasis, experiments in E.coli have shown this is not the case.</text>
</comment>
<gene>
    <name evidence="1" type="primary">cutC</name>
    <name type="ordered locus">VP0579</name>
</gene>
<evidence type="ECO:0000255" key="1">
    <source>
        <dbReference type="HAMAP-Rule" id="MF_00795"/>
    </source>
</evidence>
<dbReference type="EMBL" id="BA000031">
    <property type="protein sequence ID" value="BAC58842.1"/>
    <property type="molecule type" value="Genomic_DNA"/>
</dbReference>
<dbReference type="RefSeq" id="NP_796958.1">
    <property type="nucleotide sequence ID" value="NC_004603.1"/>
</dbReference>
<dbReference type="RefSeq" id="WP_005460200.1">
    <property type="nucleotide sequence ID" value="NC_004603.1"/>
</dbReference>
<dbReference type="SMR" id="Q87S45"/>
<dbReference type="GeneID" id="1188054"/>
<dbReference type="KEGG" id="vpa:VP0579"/>
<dbReference type="PATRIC" id="fig|223926.6.peg.550"/>
<dbReference type="eggNOG" id="COG3142">
    <property type="taxonomic scope" value="Bacteria"/>
</dbReference>
<dbReference type="HOGENOM" id="CLU_050555_3_1_6"/>
<dbReference type="Proteomes" id="UP000002493">
    <property type="component" value="Chromosome 1"/>
</dbReference>
<dbReference type="GO" id="GO:0005737">
    <property type="term" value="C:cytoplasm"/>
    <property type="evidence" value="ECO:0007669"/>
    <property type="project" value="UniProtKB-SubCell"/>
</dbReference>
<dbReference type="GO" id="GO:0005507">
    <property type="term" value="F:copper ion binding"/>
    <property type="evidence" value="ECO:0007669"/>
    <property type="project" value="TreeGrafter"/>
</dbReference>
<dbReference type="FunFam" id="3.20.20.380:FF:000001">
    <property type="entry name" value="Copper homeostasis protein CutC"/>
    <property type="match status" value="1"/>
</dbReference>
<dbReference type="Gene3D" id="3.20.20.380">
    <property type="entry name" value="Copper homeostasis (CutC) domain"/>
    <property type="match status" value="1"/>
</dbReference>
<dbReference type="HAMAP" id="MF_00795">
    <property type="entry name" value="CutC"/>
    <property type="match status" value="1"/>
</dbReference>
<dbReference type="InterPro" id="IPR005627">
    <property type="entry name" value="CutC-like"/>
</dbReference>
<dbReference type="InterPro" id="IPR036822">
    <property type="entry name" value="CutC-like_dom_sf"/>
</dbReference>
<dbReference type="PANTHER" id="PTHR12598">
    <property type="entry name" value="COPPER HOMEOSTASIS PROTEIN CUTC"/>
    <property type="match status" value="1"/>
</dbReference>
<dbReference type="PANTHER" id="PTHR12598:SF0">
    <property type="entry name" value="COPPER HOMEOSTASIS PROTEIN CUTC HOMOLOG"/>
    <property type="match status" value="1"/>
</dbReference>
<dbReference type="Pfam" id="PF03932">
    <property type="entry name" value="CutC"/>
    <property type="match status" value="1"/>
</dbReference>
<dbReference type="SUPFAM" id="SSF110395">
    <property type="entry name" value="CutC-like"/>
    <property type="match status" value="1"/>
</dbReference>
<accession>Q87S45</accession>
<keyword id="KW-0963">Cytoplasm</keyword>
<feature type="chain" id="PRO_0000215079" description="PF03932 family protein CutC">
    <location>
        <begin position="1"/>
        <end position="247"/>
    </location>
</feature>
<organism>
    <name type="scientific">Vibrio parahaemolyticus serotype O3:K6 (strain RIMD 2210633)</name>
    <dbReference type="NCBI Taxonomy" id="223926"/>
    <lineage>
        <taxon>Bacteria</taxon>
        <taxon>Pseudomonadati</taxon>
        <taxon>Pseudomonadota</taxon>
        <taxon>Gammaproteobacteria</taxon>
        <taxon>Vibrionales</taxon>
        <taxon>Vibrionaceae</taxon>
        <taxon>Vibrio</taxon>
    </lineage>
</organism>
<proteinExistence type="inferred from homology"/>
<reference key="1">
    <citation type="journal article" date="2003" name="Lancet">
        <title>Genome sequence of Vibrio parahaemolyticus: a pathogenic mechanism distinct from that of V. cholerae.</title>
        <authorList>
            <person name="Makino K."/>
            <person name="Oshima K."/>
            <person name="Kurokawa K."/>
            <person name="Yokoyama K."/>
            <person name="Uda T."/>
            <person name="Tagomori K."/>
            <person name="Iijima Y."/>
            <person name="Najima M."/>
            <person name="Nakano M."/>
            <person name="Yamashita A."/>
            <person name="Kubota Y."/>
            <person name="Kimura S."/>
            <person name="Yasunaga T."/>
            <person name="Honda T."/>
            <person name="Shinagawa H."/>
            <person name="Hattori M."/>
            <person name="Iida T."/>
        </authorList>
    </citation>
    <scope>NUCLEOTIDE SEQUENCE [LARGE SCALE GENOMIC DNA]</scope>
    <source>
        <strain>RIMD 2210633</strain>
    </source>
</reference>
<name>CUTC_VIBPA</name>